<accession>P0A2L1</accession>
<accession>Q9X965</accession>
<organism>
    <name type="scientific">Salmonella typhimurium (strain LT2 / SGSC1412 / ATCC 700720)</name>
    <dbReference type="NCBI Taxonomy" id="99287"/>
    <lineage>
        <taxon>Bacteria</taxon>
        <taxon>Pseudomonadati</taxon>
        <taxon>Pseudomonadota</taxon>
        <taxon>Gammaproteobacteria</taxon>
        <taxon>Enterobacterales</taxon>
        <taxon>Enterobacteriaceae</taxon>
        <taxon>Salmonella</taxon>
    </lineage>
</organism>
<name>YJBQ_SALTY</name>
<feature type="chain" id="PRO_0000088518" description="UPF0047 protein YjbQ">
    <location>
        <begin position="1"/>
        <end position="138"/>
    </location>
</feature>
<proteinExistence type="inferred from homology"/>
<keyword id="KW-1185">Reference proteome</keyword>
<gene>
    <name type="primary">yjbQ</name>
    <name type="ordered locus">STM4250</name>
</gene>
<dbReference type="EMBL" id="AE006468">
    <property type="protein sequence ID" value="AAL23074.1"/>
    <property type="molecule type" value="Genomic_DNA"/>
</dbReference>
<dbReference type="RefSeq" id="NP_463115.1">
    <property type="nucleotide sequence ID" value="NC_003197.2"/>
</dbReference>
<dbReference type="RefSeq" id="WP_000270393.1">
    <property type="nucleotide sequence ID" value="NC_003197.2"/>
</dbReference>
<dbReference type="SMR" id="P0A2L1"/>
<dbReference type="STRING" id="99287.STM4250"/>
<dbReference type="PaxDb" id="99287-STM4250"/>
<dbReference type="DNASU" id="1255776"/>
<dbReference type="GeneID" id="1255776"/>
<dbReference type="KEGG" id="stm:STM4250"/>
<dbReference type="PATRIC" id="fig|99287.12.peg.4470"/>
<dbReference type="HOGENOM" id="CLU_096980_0_2_6"/>
<dbReference type="OMA" id="TWQGIFF"/>
<dbReference type="PhylomeDB" id="P0A2L1"/>
<dbReference type="BioCyc" id="SENT99287:STM4250-MONOMER"/>
<dbReference type="Proteomes" id="UP000001014">
    <property type="component" value="Chromosome"/>
</dbReference>
<dbReference type="Gene3D" id="2.60.120.460">
    <property type="entry name" value="YjbQ-like"/>
    <property type="match status" value="1"/>
</dbReference>
<dbReference type="InterPro" id="IPR001602">
    <property type="entry name" value="UPF0047_YjbQ-like"/>
</dbReference>
<dbReference type="InterPro" id="IPR035917">
    <property type="entry name" value="YjbQ-like_sf"/>
</dbReference>
<dbReference type="NCBIfam" id="TIGR00149">
    <property type="entry name" value="TIGR00149_YjbQ"/>
    <property type="match status" value="1"/>
</dbReference>
<dbReference type="PANTHER" id="PTHR30615">
    <property type="entry name" value="UNCHARACTERIZED PROTEIN YJBQ-RELATED"/>
    <property type="match status" value="1"/>
</dbReference>
<dbReference type="PANTHER" id="PTHR30615:SF8">
    <property type="entry name" value="UPF0047 PROTEIN C4A8.02C"/>
    <property type="match status" value="1"/>
</dbReference>
<dbReference type="Pfam" id="PF01894">
    <property type="entry name" value="UPF0047"/>
    <property type="match status" value="1"/>
</dbReference>
<dbReference type="PIRSF" id="PIRSF004681">
    <property type="entry name" value="UCP004681"/>
    <property type="match status" value="1"/>
</dbReference>
<dbReference type="SUPFAM" id="SSF111038">
    <property type="entry name" value="YjbQ-like"/>
    <property type="match status" value="1"/>
</dbReference>
<dbReference type="PROSITE" id="PS01314">
    <property type="entry name" value="UPF0047"/>
    <property type="match status" value="1"/>
</dbReference>
<protein>
    <recommendedName>
        <fullName>UPF0047 protein YjbQ</fullName>
    </recommendedName>
</protein>
<comment type="similarity">
    <text evidence="1">Belongs to the UPF0047 family.</text>
</comment>
<sequence length="138" mass="15484">MWYQRTITLSEKPRGFHLITDEITDKLSGLPPVETGLLHLLLLHTSASLTLNENCDPTVRADMERHFLKTVPDNAAYEHDYEGADDMPSHIKSSVLGVSLLLPVRQGRLQLGTWQGIWLGEHRIHGGPRKIIATLQGE</sequence>
<reference key="1">
    <citation type="journal article" date="2001" name="Nature">
        <title>Complete genome sequence of Salmonella enterica serovar Typhimurium LT2.</title>
        <authorList>
            <person name="McClelland M."/>
            <person name="Sanderson K.E."/>
            <person name="Spieth J."/>
            <person name="Clifton S.W."/>
            <person name="Latreille P."/>
            <person name="Courtney L."/>
            <person name="Porwollik S."/>
            <person name="Ali J."/>
            <person name="Dante M."/>
            <person name="Du F."/>
            <person name="Hou S."/>
            <person name="Layman D."/>
            <person name="Leonard S."/>
            <person name="Nguyen C."/>
            <person name="Scott K."/>
            <person name="Holmes A."/>
            <person name="Grewal N."/>
            <person name="Mulvaney E."/>
            <person name="Ryan E."/>
            <person name="Sun H."/>
            <person name="Florea L."/>
            <person name="Miller W."/>
            <person name="Stoneking T."/>
            <person name="Nhan M."/>
            <person name="Waterston R."/>
            <person name="Wilson R.K."/>
        </authorList>
    </citation>
    <scope>NUCLEOTIDE SEQUENCE [LARGE SCALE GENOMIC DNA]</scope>
    <source>
        <strain>LT2 / SGSC1412 / ATCC 700720</strain>
    </source>
</reference>
<evidence type="ECO:0000305" key="1"/>